<protein>
    <recommendedName>
        <fullName evidence="1">Ferrochelatase</fullName>
        <ecNumber evidence="1">4.98.1.1</ecNumber>
    </recommendedName>
    <alternativeName>
        <fullName evidence="1">Heme synthase</fullName>
    </alternativeName>
    <alternativeName>
        <fullName evidence="1">Protoheme ferro-lyase</fullName>
    </alternativeName>
</protein>
<dbReference type="EC" id="4.98.1.1" evidence="1"/>
<dbReference type="EMBL" id="CP001217">
    <property type="protein sequence ID" value="ACJ08197.1"/>
    <property type="molecule type" value="Genomic_DNA"/>
</dbReference>
<dbReference type="SMR" id="B6JMR9"/>
<dbReference type="KEGG" id="hpp:HPP12_1045"/>
<dbReference type="HOGENOM" id="CLU_018884_4_1_7"/>
<dbReference type="UniPathway" id="UPA00252">
    <property type="reaction ID" value="UER00325"/>
</dbReference>
<dbReference type="Proteomes" id="UP000008198">
    <property type="component" value="Chromosome"/>
</dbReference>
<dbReference type="GO" id="GO:0005737">
    <property type="term" value="C:cytoplasm"/>
    <property type="evidence" value="ECO:0007669"/>
    <property type="project" value="UniProtKB-SubCell"/>
</dbReference>
<dbReference type="GO" id="GO:0004325">
    <property type="term" value="F:ferrochelatase activity"/>
    <property type="evidence" value="ECO:0007669"/>
    <property type="project" value="UniProtKB-UniRule"/>
</dbReference>
<dbReference type="GO" id="GO:0046872">
    <property type="term" value="F:metal ion binding"/>
    <property type="evidence" value="ECO:0007669"/>
    <property type="project" value="UniProtKB-KW"/>
</dbReference>
<dbReference type="GO" id="GO:0006783">
    <property type="term" value="P:heme biosynthetic process"/>
    <property type="evidence" value="ECO:0007669"/>
    <property type="project" value="UniProtKB-UniRule"/>
</dbReference>
<dbReference type="CDD" id="cd00419">
    <property type="entry name" value="Ferrochelatase_C"/>
    <property type="match status" value="1"/>
</dbReference>
<dbReference type="CDD" id="cd03411">
    <property type="entry name" value="Ferrochelatase_N"/>
    <property type="match status" value="1"/>
</dbReference>
<dbReference type="Gene3D" id="3.40.50.1400">
    <property type="match status" value="2"/>
</dbReference>
<dbReference type="HAMAP" id="MF_00323">
    <property type="entry name" value="Ferrochelatase"/>
    <property type="match status" value="1"/>
</dbReference>
<dbReference type="InterPro" id="IPR001015">
    <property type="entry name" value="Ferrochelatase"/>
</dbReference>
<dbReference type="InterPro" id="IPR019772">
    <property type="entry name" value="Ferrochelatase_AS"/>
</dbReference>
<dbReference type="InterPro" id="IPR033644">
    <property type="entry name" value="Ferrochelatase_C"/>
</dbReference>
<dbReference type="InterPro" id="IPR033659">
    <property type="entry name" value="Ferrochelatase_N"/>
</dbReference>
<dbReference type="NCBIfam" id="TIGR00109">
    <property type="entry name" value="hemH"/>
    <property type="match status" value="1"/>
</dbReference>
<dbReference type="PANTHER" id="PTHR11108">
    <property type="entry name" value="FERROCHELATASE"/>
    <property type="match status" value="1"/>
</dbReference>
<dbReference type="PANTHER" id="PTHR11108:SF1">
    <property type="entry name" value="FERROCHELATASE, MITOCHONDRIAL"/>
    <property type="match status" value="1"/>
</dbReference>
<dbReference type="Pfam" id="PF00762">
    <property type="entry name" value="Ferrochelatase"/>
    <property type="match status" value="1"/>
</dbReference>
<dbReference type="SUPFAM" id="SSF53800">
    <property type="entry name" value="Chelatase"/>
    <property type="match status" value="1"/>
</dbReference>
<dbReference type="PROSITE" id="PS00534">
    <property type="entry name" value="FERROCHELATASE"/>
    <property type="match status" value="1"/>
</dbReference>
<feature type="chain" id="PRO_1000116049" description="Ferrochelatase">
    <location>
        <begin position="1"/>
        <end position="334"/>
    </location>
</feature>
<feature type="binding site" evidence="1">
    <location>
        <position position="207"/>
    </location>
    <ligand>
        <name>Fe cation</name>
        <dbReference type="ChEBI" id="CHEBI:24875"/>
    </ligand>
</feature>
<feature type="binding site" evidence="1">
    <location>
        <position position="288"/>
    </location>
    <ligand>
        <name>Fe cation</name>
        <dbReference type="ChEBI" id="CHEBI:24875"/>
    </ligand>
</feature>
<keyword id="KW-0963">Cytoplasm</keyword>
<keyword id="KW-0350">Heme biosynthesis</keyword>
<keyword id="KW-0408">Iron</keyword>
<keyword id="KW-0456">Lyase</keyword>
<keyword id="KW-0479">Metal-binding</keyword>
<keyword id="KW-0627">Porphyrin biosynthesis</keyword>
<sequence>MNLINEKLNNLENNAAKSPKEAVILLNMGGPNSLYEVGVFLKNMFDDPFILTIKNNFMRKMVGKMIINSRIEKSKKIYEKLGGKSPLTPITFALTERLNELDPSRFYTYAMRYTPPYASMVLQDLALKEVESLVFFSMYPQYSSTTTLSSFNDAFNALKSLETFRPKVRVIERFYADKKLNEIILNTILSTLNNRKSQDFVLIFSVHGLPKSIVDAGDTYQQECEHHVSLLKELMQQKNIPFKEVLLSYQSKLGPMKWLEPSTEELIEKHRKSNIIIYPLAFTIDNSETIYELDMQYRLMAERLAIKEYLVCPCLNDSIEFAKFIIERVKNLKE</sequence>
<comment type="function">
    <text evidence="1">Catalyzes the ferrous insertion into protoporphyrin IX.</text>
</comment>
<comment type="catalytic activity">
    <reaction evidence="1">
        <text>heme b + 2 H(+) = protoporphyrin IX + Fe(2+)</text>
        <dbReference type="Rhea" id="RHEA:22584"/>
        <dbReference type="ChEBI" id="CHEBI:15378"/>
        <dbReference type="ChEBI" id="CHEBI:29033"/>
        <dbReference type="ChEBI" id="CHEBI:57306"/>
        <dbReference type="ChEBI" id="CHEBI:60344"/>
        <dbReference type="EC" id="4.98.1.1"/>
    </reaction>
</comment>
<comment type="pathway">
    <text evidence="1">Porphyrin-containing compound metabolism; protoheme biosynthesis; protoheme from protoporphyrin-IX: step 1/1.</text>
</comment>
<comment type="subcellular location">
    <subcellularLocation>
        <location evidence="1">Cytoplasm</location>
    </subcellularLocation>
</comment>
<comment type="similarity">
    <text evidence="1">Belongs to the ferrochelatase family.</text>
</comment>
<accession>B6JMR9</accession>
<organism>
    <name type="scientific">Helicobacter pylori (strain P12)</name>
    <dbReference type="NCBI Taxonomy" id="570508"/>
    <lineage>
        <taxon>Bacteria</taxon>
        <taxon>Pseudomonadati</taxon>
        <taxon>Campylobacterota</taxon>
        <taxon>Epsilonproteobacteria</taxon>
        <taxon>Campylobacterales</taxon>
        <taxon>Helicobacteraceae</taxon>
        <taxon>Helicobacter</taxon>
    </lineage>
</organism>
<gene>
    <name evidence="1" type="primary">hemH</name>
    <name type="ordered locus">HPP12_1045</name>
</gene>
<evidence type="ECO:0000255" key="1">
    <source>
        <dbReference type="HAMAP-Rule" id="MF_00323"/>
    </source>
</evidence>
<name>HEMH_HELP2</name>
<proteinExistence type="inferred from homology"/>
<reference key="1">
    <citation type="submission" date="2008-10" db="EMBL/GenBank/DDBJ databases">
        <title>The complete genome sequence of Helicobacter pylori strain P12.</title>
        <authorList>
            <person name="Fischer W."/>
            <person name="Windhager L."/>
            <person name="Karnholz A."/>
            <person name="Zeiller M."/>
            <person name="Zimmer R."/>
            <person name="Haas R."/>
        </authorList>
    </citation>
    <scope>NUCLEOTIDE SEQUENCE [LARGE SCALE GENOMIC DNA]</scope>
    <source>
        <strain>P12</strain>
    </source>
</reference>